<sequence>MSLLPVMVIFGLSFPPIFLELLISLALFFVVRRILQPTGIYEFVWHPALFNTALYCCLFYLTSRLFS</sequence>
<proteinExistence type="inferred from homology"/>
<name>AAEX_YERPB</name>
<organism>
    <name type="scientific">Yersinia pseudotuberculosis serotype IB (strain PB1/+)</name>
    <dbReference type="NCBI Taxonomy" id="502801"/>
    <lineage>
        <taxon>Bacteria</taxon>
        <taxon>Pseudomonadati</taxon>
        <taxon>Pseudomonadota</taxon>
        <taxon>Gammaproteobacteria</taxon>
        <taxon>Enterobacterales</taxon>
        <taxon>Yersiniaceae</taxon>
        <taxon>Yersinia</taxon>
    </lineage>
</organism>
<feature type="chain" id="PRO_1000146767" description="Protein AaeX">
    <location>
        <begin position="1"/>
        <end position="67"/>
    </location>
</feature>
<feature type="transmembrane region" description="Helical" evidence="1">
    <location>
        <begin position="3"/>
        <end position="23"/>
    </location>
</feature>
<feature type="transmembrane region" description="Helical" evidence="1">
    <location>
        <begin position="39"/>
        <end position="59"/>
    </location>
</feature>
<evidence type="ECO:0000255" key="1">
    <source>
        <dbReference type="HAMAP-Rule" id="MF_01546"/>
    </source>
</evidence>
<accession>B2K438</accession>
<gene>
    <name evidence="1" type="primary">aaeX</name>
    <name type="ordered locus">YPTS_3734</name>
</gene>
<reference key="1">
    <citation type="submission" date="2008-04" db="EMBL/GenBank/DDBJ databases">
        <title>Complete sequence of Yersinia pseudotuberculosis PB1/+.</title>
        <authorList>
            <person name="Copeland A."/>
            <person name="Lucas S."/>
            <person name="Lapidus A."/>
            <person name="Glavina del Rio T."/>
            <person name="Dalin E."/>
            <person name="Tice H."/>
            <person name="Bruce D."/>
            <person name="Goodwin L."/>
            <person name="Pitluck S."/>
            <person name="Munk A.C."/>
            <person name="Brettin T."/>
            <person name="Detter J.C."/>
            <person name="Han C."/>
            <person name="Tapia R."/>
            <person name="Schmutz J."/>
            <person name="Larimer F."/>
            <person name="Land M."/>
            <person name="Hauser L."/>
            <person name="Challacombe J.F."/>
            <person name="Green L."/>
            <person name="Lindler L.E."/>
            <person name="Nikolich M.P."/>
            <person name="Richardson P."/>
        </authorList>
    </citation>
    <scope>NUCLEOTIDE SEQUENCE [LARGE SCALE GENOMIC DNA]</scope>
    <source>
        <strain>PB1/+</strain>
    </source>
</reference>
<comment type="subcellular location">
    <subcellularLocation>
        <location evidence="1">Cell membrane</location>
        <topology evidence="1">Multi-pass membrane protein</topology>
    </subcellularLocation>
</comment>
<comment type="similarity">
    <text evidence="1">Belongs to the AaeX family.</text>
</comment>
<keyword id="KW-1003">Cell membrane</keyword>
<keyword id="KW-0472">Membrane</keyword>
<keyword id="KW-0812">Transmembrane</keyword>
<keyword id="KW-1133">Transmembrane helix</keyword>
<dbReference type="EMBL" id="CP001048">
    <property type="protein sequence ID" value="ACC90687.1"/>
    <property type="molecule type" value="Genomic_DNA"/>
</dbReference>
<dbReference type="RefSeq" id="WP_002210093.1">
    <property type="nucleotide sequence ID" value="NZ_CP009780.1"/>
</dbReference>
<dbReference type="GeneID" id="57975109"/>
<dbReference type="KEGG" id="ypb:YPTS_3734"/>
<dbReference type="PATRIC" id="fig|502801.10.peg.3192"/>
<dbReference type="GO" id="GO:0005886">
    <property type="term" value="C:plasma membrane"/>
    <property type="evidence" value="ECO:0007669"/>
    <property type="project" value="UniProtKB-SubCell"/>
</dbReference>
<dbReference type="HAMAP" id="MF_01546">
    <property type="entry name" value="AaeX"/>
    <property type="match status" value="1"/>
</dbReference>
<dbReference type="InterPro" id="IPR012451">
    <property type="entry name" value="DUF1656"/>
</dbReference>
<dbReference type="NCBIfam" id="NF008615">
    <property type="entry name" value="PRK11594.1"/>
    <property type="match status" value="1"/>
</dbReference>
<dbReference type="Pfam" id="PF07869">
    <property type="entry name" value="DUF1656"/>
    <property type="match status" value="1"/>
</dbReference>
<protein>
    <recommendedName>
        <fullName evidence="1">Protein AaeX</fullName>
    </recommendedName>
</protein>